<proteinExistence type="evidence at transcript level"/>
<protein>
    <recommendedName>
        <fullName>Mitogen-activated protein kinase kinase kinase 7</fullName>
        <ecNumber evidence="2">2.7.11.25</ecNumber>
    </recommendedName>
</protein>
<name>M3K7_PONAB</name>
<dbReference type="EC" id="2.7.11.25" evidence="2"/>
<dbReference type="EMBL" id="CR857142">
    <property type="protein sequence ID" value="CAH89444.1"/>
    <property type="molecule type" value="mRNA"/>
</dbReference>
<dbReference type="RefSeq" id="NP_001124617.1">
    <property type="nucleotide sequence ID" value="NM_001131145.2"/>
</dbReference>
<dbReference type="SMR" id="Q5RFL3"/>
<dbReference type="FunCoup" id="Q5RFL3">
    <property type="interactions" value="5104"/>
</dbReference>
<dbReference type="STRING" id="9601.ENSPPYP00000018861"/>
<dbReference type="Ensembl" id="ENSPPYT00000019607.3">
    <property type="protein sequence ID" value="ENSPPYP00000018861.3"/>
    <property type="gene ID" value="ENSPPYG00000016850.3"/>
</dbReference>
<dbReference type="GeneID" id="100171454"/>
<dbReference type="KEGG" id="pon:100171454"/>
<dbReference type="CTD" id="6885"/>
<dbReference type="eggNOG" id="KOG0192">
    <property type="taxonomic scope" value="Eukaryota"/>
</dbReference>
<dbReference type="GeneTree" id="ENSGT00940000157785"/>
<dbReference type="InParanoid" id="Q5RFL3"/>
<dbReference type="OMA" id="ARTQCFA"/>
<dbReference type="OrthoDB" id="10261027at2759"/>
<dbReference type="Proteomes" id="UP000001595">
    <property type="component" value="Chromosome 6"/>
</dbReference>
<dbReference type="GO" id="GO:0140672">
    <property type="term" value="C:ATAC complex"/>
    <property type="evidence" value="ECO:0007669"/>
    <property type="project" value="Ensembl"/>
</dbReference>
<dbReference type="GO" id="GO:0005829">
    <property type="term" value="C:cytosol"/>
    <property type="evidence" value="ECO:0007669"/>
    <property type="project" value="Ensembl"/>
</dbReference>
<dbReference type="GO" id="GO:0005886">
    <property type="term" value="C:plasma membrane"/>
    <property type="evidence" value="ECO:0007669"/>
    <property type="project" value="UniProtKB-SubCell"/>
</dbReference>
<dbReference type="GO" id="GO:0005524">
    <property type="term" value="F:ATP binding"/>
    <property type="evidence" value="ECO:0007669"/>
    <property type="project" value="UniProtKB-KW"/>
</dbReference>
<dbReference type="GO" id="GO:0042802">
    <property type="term" value="F:identical protein binding"/>
    <property type="evidence" value="ECO:0007669"/>
    <property type="project" value="Ensembl"/>
</dbReference>
<dbReference type="GO" id="GO:1990450">
    <property type="term" value="F:linear polyubiquitin binding"/>
    <property type="evidence" value="ECO:0007669"/>
    <property type="project" value="Ensembl"/>
</dbReference>
<dbReference type="GO" id="GO:0000287">
    <property type="term" value="F:magnesium ion binding"/>
    <property type="evidence" value="ECO:0007669"/>
    <property type="project" value="InterPro"/>
</dbReference>
<dbReference type="GO" id="GO:0004707">
    <property type="term" value="F:MAP kinase activity"/>
    <property type="evidence" value="ECO:0007669"/>
    <property type="project" value="Ensembl"/>
</dbReference>
<dbReference type="GO" id="GO:0004709">
    <property type="term" value="F:MAP kinase kinase kinase activity"/>
    <property type="evidence" value="ECO:0000250"/>
    <property type="project" value="UniProtKB"/>
</dbReference>
<dbReference type="GO" id="GO:0106310">
    <property type="term" value="F:protein serine kinase activity"/>
    <property type="evidence" value="ECO:0007669"/>
    <property type="project" value="RHEA"/>
</dbReference>
<dbReference type="GO" id="GO:0030971">
    <property type="term" value="F:receptor tyrosine kinase binding"/>
    <property type="evidence" value="ECO:0007669"/>
    <property type="project" value="Ensembl"/>
</dbReference>
<dbReference type="GO" id="GO:0097110">
    <property type="term" value="F:scaffold protein binding"/>
    <property type="evidence" value="ECO:0007669"/>
    <property type="project" value="Ensembl"/>
</dbReference>
<dbReference type="GO" id="GO:0006915">
    <property type="term" value="P:apoptotic process"/>
    <property type="evidence" value="ECO:0007669"/>
    <property type="project" value="UniProtKB-KW"/>
</dbReference>
<dbReference type="GO" id="GO:0042742">
    <property type="term" value="P:defense response to bacterium"/>
    <property type="evidence" value="ECO:0007669"/>
    <property type="project" value="Ensembl"/>
</dbReference>
<dbReference type="GO" id="GO:0007252">
    <property type="term" value="P:I-kappaB phosphorylation"/>
    <property type="evidence" value="ECO:0000250"/>
    <property type="project" value="UniProtKB"/>
</dbReference>
<dbReference type="GO" id="GO:0006955">
    <property type="term" value="P:immune response"/>
    <property type="evidence" value="ECO:0007669"/>
    <property type="project" value="TreeGrafter"/>
</dbReference>
<dbReference type="GO" id="GO:0006954">
    <property type="term" value="P:inflammatory response"/>
    <property type="evidence" value="ECO:0007669"/>
    <property type="project" value="Ensembl"/>
</dbReference>
<dbReference type="GO" id="GO:0070498">
    <property type="term" value="P:interleukin-1-mediated signaling pathway"/>
    <property type="evidence" value="ECO:0007669"/>
    <property type="project" value="Ensembl"/>
</dbReference>
<dbReference type="GO" id="GO:0038173">
    <property type="term" value="P:interleukin-17A-mediated signaling pathway"/>
    <property type="evidence" value="ECO:0007669"/>
    <property type="project" value="Ensembl"/>
</dbReference>
<dbReference type="GO" id="GO:0038172">
    <property type="term" value="P:interleukin-33-mediated signaling pathway"/>
    <property type="evidence" value="ECO:0007669"/>
    <property type="project" value="Ensembl"/>
</dbReference>
<dbReference type="GO" id="GO:0007254">
    <property type="term" value="P:JNK cascade"/>
    <property type="evidence" value="ECO:0000250"/>
    <property type="project" value="UniProtKB"/>
</dbReference>
<dbReference type="GO" id="GO:0038066">
    <property type="term" value="P:p38MAPK cascade"/>
    <property type="evidence" value="ECO:0007669"/>
    <property type="project" value="Ensembl"/>
</dbReference>
<dbReference type="GO" id="GO:0043123">
    <property type="term" value="P:positive regulation of canonical NF-kappaB signal transduction"/>
    <property type="evidence" value="ECO:0007669"/>
    <property type="project" value="Ensembl"/>
</dbReference>
<dbReference type="GO" id="GO:0032743">
    <property type="term" value="P:positive regulation of interleukin-2 production"/>
    <property type="evidence" value="ECO:0007669"/>
    <property type="project" value="Ensembl"/>
</dbReference>
<dbReference type="GO" id="GO:0043507">
    <property type="term" value="P:positive regulation of JUN kinase activity"/>
    <property type="evidence" value="ECO:0000250"/>
    <property type="project" value="UniProtKB"/>
</dbReference>
<dbReference type="GO" id="GO:1901224">
    <property type="term" value="P:positive regulation of non-canonical NF-kappaB signal transduction"/>
    <property type="evidence" value="ECO:0007669"/>
    <property type="project" value="Ensembl"/>
</dbReference>
<dbReference type="GO" id="GO:0002726">
    <property type="term" value="P:positive regulation of T cell cytokine production"/>
    <property type="evidence" value="ECO:0007669"/>
    <property type="project" value="Ensembl"/>
</dbReference>
<dbReference type="GO" id="GO:0051403">
    <property type="term" value="P:stress-activated MAPK cascade"/>
    <property type="evidence" value="ECO:0007669"/>
    <property type="project" value="Ensembl"/>
</dbReference>
<dbReference type="GO" id="GO:0034142">
    <property type="term" value="P:toll-like receptor 4 signaling pathway"/>
    <property type="evidence" value="ECO:0007669"/>
    <property type="project" value="Ensembl"/>
</dbReference>
<dbReference type="CDD" id="cd14058">
    <property type="entry name" value="STKc_TAK1"/>
    <property type="match status" value="1"/>
</dbReference>
<dbReference type="FunFam" id="1.10.510.10:FF:000143">
    <property type="entry name" value="Mitogen-activated protein kinase kinase kinase 7"/>
    <property type="match status" value="1"/>
</dbReference>
<dbReference type="FunFam" id="3.30.200.20:FF:000152">
    <property type="entry name" value="Mitogen-activated protein kinase kinase kinase 7"/>
    <property type="match status" value="1"/>
</dbReference>
<dbReference type="Gene3D" id="3.30.200.20">
    <property type="entry name" value="Phosphorylase Kinase, domain 1"/>
    <property type="match status" value="1"/>
</dbReference>
<dbReference type="Gene3D" id="1.10.510.10">
    <property type="entry name" value="Transferase(Phosphotransferase) domain 1"/>
    <property type="match status" value="1"/>
</dbReference>
<dbReference type="InterPro" id="IPR011009">
    <property type="entry name" value="Kinase-like_dom_sf"/>
</dbReference>
<dbReference type="InterPro" id="IPR049637">
    <property type="entry name" value="MAP3K7"/>
</dbReference>
<dbReference type="InterPro" id="IPR000719">
    <property type="entry name" value="Prot_kinase_dom"/>
</dbReference>
<dbReference type="InterPro" id="IPR017441">
    <property type="entry name" value="Protein_kinase_ATP_BS"/>
</dbReference>
<dbReference type="InterPro" id="IPR001245">
    <property type="entry name" value="Ser-Thr/Tyr_kinase_cat_dom"/>
</dbReference>
<dbReference type="InterPro" id="IPR008271">
    <property type="entry name" value="Ser/Thr_kinase_AS"/>
</dbReference>
<dbReference type="PANTHER" id="PTHR46716">
    <property type="entry name" value="MITOGEN-ACTIVATED PROTEIN KINASE KINASE KINASE 7"/>
    <property type="match status" value="1"/>
</dbReference>
<dbReference type="PANTHER" id="PTHR46716:SF1">
    <property type="entry name" value="MITOGEN-ACTIVATED PROTEIN KINASE KINASE KINASE 7"/>
    <property type="match status" value="1"/>
</dbReference>
<dbReference type="Pfam" id="PF07714">
    <property type="entry name" value="PK_Tyr_Ser-Thr"/>
    <property type="match status" value="1"/>
</dbReference>
<dbReference type="PIRSF" id="PIRSF038168">
    <property type="entry name" value="MAPKKK7"/>
    <property type="match status" value="1"/>
</dbReference>
<dbReference type="PRINTS" id="PR00109">
    <property type="entry name" value="TYRKINASE"/>
</dbReference>
<dbReference type="SMART" id="SM00220">
    <property type="entry name" value="S_TKc"/>
    <property type="match status" value="1"/>
</dbReference>
<dbReference type="SUPFAM" id="SSF56112">
    <property type="entry name" value="Protein kinase-like (PK-like)"/>
    <property type="match status" value="1"/>
</dbReference>
<dbReference type="PROSITE" id="PS00107">
    <property type="entry name" value="PROTEIN_KINASE_ATP"/>
    <property type="match status" value="1"/>
</dbReference>
<dbReference type="PROSITE" id="PS50011">
    <property type="entry name" value="PROTEIN_KINASE_DOM"/>
    <property type="match status" value="1"/>
</dbReference>
<dbReference type="PROSITE" id="PS00108">
    <property type="entry name" value="PROTEIN_KINASE_ST"/>
    <property type="match status" value="1"/>
</dbReference>
<feature type="chain" id="PRO_0000314285" description="Mitogen-activated protein kinase kinase kinase 7">
    <location>
        <begin position="1"/>
        <end position="606"/>
    </location>
</feature>
<feature type="domain" description="Protein kinase" evidence="4">
    <location>
        <begin position="36"/>
        <end position="291"/>
    </location>
</feature>
<feature type="region of interest" description="Interaction with MAPK8IP1" evidence="1">
    <location>
        <begin position="1"/>
        <end position="300"/>
    </location>
</feature>
<feature type="region of interest" description="Disordered" evidence="6">
    <location>
        <begin position="301"/>
        <end position="338"/>
    </location>
</feature>
<feature type="region of interest" description="Disordered" evidence="6">
    <location>
        <begin position="354"/>
        <end position="391"/>
    </location>
</feature>
<feature type="region of interest" description="Disordered" evidence="6">
    <location>
        <begin position="443"/>
        <end position="493"/>
    </location>
</feature>
<feature type="compositionally biased region" description="Polar residues" evidence="6">
    <location>
        <begin position="306"/>
        <end position="338"/>
    </location>
</feature>
<feature type="compositionally biased region" description="Low complexity" evidence="6">
    <location>
        <begin position="361"/>
        <end position="375"/>
    </location>
</feature>
<feature type="compositionally biased region" description="Polar residues" evidence="6">
    <location>
        <begin position="443"/>
        <end position="452"/>
    </location>
</feature>
<feature type="compositionally biased region" description="Low complexity" evidence="6">
    <location>
        <begin position="453"/>
        <end position="463"/>
    </location>
</feature>
<feature type="compositionally biased region" description="Polar residues" evidence="6">
    <location>
        <begin position="464"/>
        <end position="473"/>
    </location>
</feature>
<feature type="active site" description="Proton acceptor" evidence="4 5">
    <location>
        <position position="156"/>
    </location>
</feature>
<feature type="binding site" evidence="4">
    <location>
        <begin position="42"/>
        <end position="50"/>
    </location>
    <ligand>
        <name>ATP</name>
        <dbReference type="ChEBI" id="CHEBI:30616"/>
    </ligand>
</feature>
<feature type="binding site">
    <location>
        <position position="63"/>
    </location>
    <ligand>
        <name>ATP</name>
        <dbReference type="ChEBI" id="CHEBI:30616"/>
    </ligand>
</feature>
<feature type="modified residue" description="Phosphothreonine; by autocatalysis" evidence="2">
    <location>
        <position position="184"/>
    </location>
</feature>
<feature type="modified residue" description="Phosphothreonine; by autocatalysis" evidence="2">
    <location>
        <position position="187"/>
    </location>
</feature>
<feature type="modified residue" description="Phosphoserine; by autocatalysis" evidence="2">
    <location>
        <position position="192"/>
    </location>
</feature>
<feature type="modified residue" description="Phosphoserine" evidence="2">
    <location>
        <position position="367"/>
    </location>
</feature>
<feature type="modified residue" description="Phosphoserine" evidence="2">
    <location>
        <position position="389"/>
    </location>
</feature>
<feature type="modified residue" description="Phosphoserine" evidence="2">
    <location>
        <position position="439"/>
    </location>
</feature>
<feature type="modified residue" description="Phosphoserine" evidence="2">
    <location>
        <position position="455"/>
    </location>
</feature>
<feature type="cross-link" description="Glycyl lysine isopeptide (Lys-Gly) (interchain with G-Cter in ubiquitin)" evidence="2">
    <location>
        <position position="72"/>
    </location>
</feature>
<feature type="cross-link" description="Glycyl lysine isopeptide (Lys-Gly) (interchain with G-Cter in ubiquitin)" evidence="3">
    <location>
        <position position="158"/>
    </location>
</feature>
<feature type="cross-link" description="Glycyl lysine isopeptide (Lys-Gly) (interchain with G-Cter in ubiquitin)" evidence="3">
    <location>
        <position position="209"/>
    </location>
</feature>
<gene>
    <name type="primary">MAP3K7</name>
</gene>
<evidence type="ECO:0000250" key="1"/>
<evidence type="ECO:0000250" key="2">
    <source>
        <dbReference type="UniProtKB" id="O43318"/>
    </source>
</evidence>
<evidence type="ECO:0000250" key="3">
    <source>
        <dbReference type="UniProtKB" id="Q62073"/>
    </source>
</evidence>
<evidence type="ECO:0000255" key="4">
    <source>
        <dbReference type="PROSITE-ProRule" id="PRU00159"/>
    </source>
</evidence>
<evidence type="ECO:0000255" key="5">
    <source>
        <dbReference type="PROSITE-ProRule" id="PRU10027"/>
    </source>
</evidence>
<evidence type="ECO:0000256" key="6">
    <source>
        <dbReference type="SAM" id="MobiDB-lite"/>
    </source>
</evidence>
<evidence type="ECO:0000305" key="7"/>
<accession>Q5RFL3</accession>
<organism>
    <name type="scientific">Pongo abelii</name>
    <name type="common">Sumatran orangutan</name>
    <name type="synonym">Pongo pygmaeus abelii</name>
    <dbReference type="NCBI Taxonomy" id="9601"/>
    <lineage>
        <taxon>Eukaryota</taxon>
        <taxon>Metazoa</taxon>
        <taxon>Chordata</taxon>
        <taxon>Craniata</taxon>
        <taxon>Vertebrata</taxon>
        <taxon>Euteleostomi</taxon>
        <taxon>Mammalia</taxon>
        <taxon>Eutheria</taxon>
        <taxon>Euarchontoglires</taxon>
        <taxon>Primates</taxon>
        <taxon>Haplorrhini</taxon>
        <taxon>Catarrhini</taxon>
        <taxon>Hominidae</taxon>
        <taxon>Pongo</taxon>
    </lineage>
</organism>
<reference key="1">
    <citation type="submission" date="2004-11" db="EMBL/GenBank/DDBJ databases">
        <authorList>
            <consortium name="The German cDNA consortium"/>
        </authorList>
    </citation>
    <scope>NUCLEOTIDE SEQUENCE [LARGE SCALE MRNA]</scope>
    <source>
        <tissue>Kidney</tissue>
    </source>
</reference>
<sequence length="606" mass="67166">MSTASAASSSSSSSAGEMIEAPSQVLNFEEIDYKEIEVEEVVGRGAFGVVCKAKWRAKDVAIKQIESESERKAFIVELRQLSRVNHPNIVKLYGACLNPVCLVMEYAEGGSLYNVLHGAEPLPYYTAAHAMSWCLQCSQGVAYLHSMQPKALIHRDLKPPNLLLVAGGTVLKICDFGTACDIQTHMTNNKGSAAWMAPEVFEGSNYSEKCDVFSWGIILWEVITRRKPFDEIGGPAFRIMWAVHNGTRPPLIKNLPKPIESLMTRCWSKDPSQRPSMEEIVKIMTHLMRYFPGADEPLQYPCQYSDEGQSNSATSTGSFMDIASTNTSNKSDTNMEQVPATNDTIKRLESKLLKNQAKQQSESGRLSLGASRGSSVESLPPASEGKRMSADMSEIEARIAATTAYSKPKRGHRKTASFGNILDVPEIVISGNGQPRRRSIQDLTVTGTEPGQVSSRSSSPSVRMITTSGPTSEKPTRSHPWTPDDSTDTNGSDNSIPMAYLTLDHQLQPLAPCPNSKESMAVFEQHCKMAQEYMKVQTEIALLLQRKQELVAELDQDEKDQQNTSRLVQEHKKLLDENKSLSTYYQQCKKQLEVIRSQQQKRQGTS</sequence>
<comment type="function">
    <text evidence="2 3">Serine/threonine kinase which acts as an essential component of the MAP kinase signal transduction pathway. Plays an important role in the cascades of cellular responses evoked by changes in the environment. Mediates signal transduction of TRAF6, various cytokines including interleukin-1 (IL-1), transforming growth factor-beta (TGFB), TGFB-related factors like BMP2 and BMP4, toll-like receptors (TLR), tumor necrosis factor receptor CD40 and B-cell receptor (BCR). Once activated, acts as an upstream activator of the MKK/JNK signal transduction cascade and the p38 MAPK signal transduction cascade through the phosphorylation and activation of several MAP kinase kinases like MAP2K1/MEK1, MAP2K3/MKK3, MAP2K6/MKK6 and MAP2K7/MKK7. These MAP2Ks in turn activate p38 MAPKs and c-jun N-terminal kinases (JNKs); both p38 MAPK and JNK pathways control the transcription factors activator protein-1 (AP-1). Independently of MAP2Ks and p38 MAPKs, acts as a key activator of NF-kappa-B by promoting activation of the I-kappa-B-kinase (IKK) core complex. Mechanistically, recruited to polyubiquitin chains of RIPK2 and IKBKG/NEMO via TAB2/MAP3K7IP2 and TAB3/MAP3K7IP3, and catalyzes phosphorylation and activation of IKBKB/IKKB component of the IKK complex, leading to NF-kappa-B activation. In osmotic stress signaling, plays a major role in the activation of MAPK8/JNK1, but not that of NF-kappa-B. Promotes TRIM5 capsid-specific restriction activity. Phosphorylates RIPK1 at 'Ser-321' which positively regulates RIPK1 interaction with RIPK3 to promote necroptosis but negatively regulates RIPK1 kinase activity and its interaction with FADD to mediate apoptosis. Phosphorylates STING1 in response to cGAMP-activation, promoting association between STEEP1 and STING1 and STING1 translocation to COPII vesicles.</text>
</comment>
<comment type="catalytic activity">
    <reaction evidence="2">
        <text>L-seryl-[protein] + ATP = O-phospho-L-seryl-[protein] + ADP + H(+)</text>
        <dbReference type="Rhea" id="RHEA:17989"/>
        <dbReference type="Rhea" id="RHEA-COMP:9863"/>
        <dbReference type="Rhea" id="RHEA-COMP:11604"/>
        <dbReference type="ChEBI" id="CHEBI:15378"/>
        <dbReference type="ChEBI" id="CHEBI:29999"/>
        <dbReference type="ChEBI" id="CHEBI:30616"/>
        <dbReference type="ChEBI" id="CHEBI:83421"/>
        <dbReference type="ChEBI" id="CHEBI:456216"/>
        <dbReference type="EC" id="2.7.11.25"/>
    </reaction>
</comment>
<comment type="catalytic activity">
    <reaction evidence="2">
        <text>L-threonyl-[protein] + ATP = O-phospho-L-threonyl-[protein] + ADP + H(+)</text>
        <dbReference type="Rhea" id="RHEA:46608"/>
        <dbReference type="Rhea" id="RHEA-COMP:11060"/>
        <dbReference type="Rhea" id="RHEA-COMP:11605"/>
        <dbReference type="ChEBI" id="CHEBI:15378"/>
        <dbReference type="ChEBI" id="CHEBI:30013"/>
        <dbReference type="ChEBI" id="CHEBI:30616"/>
        <dbReference type="ChEBI" id="CHEBI:61977"/>
        <dbReference type="ChEBI" id="CHEBI:456216"/>
        <dbReference type="EC" id="2.7.11.25"/>
    </reaction>
</comment>
<comment type="cofactor">
    <cofactor evidence="2">
        <name>Mg(2+)</name>
        <dbReference type="ChEBI" id="CHEBI:18420"/>
    </cofactor>
</comment>
<comment type="activity regulation">
    <text evidence="2">Activated by pro-inflammatory cytokines and in response to physical and chemical stresses, including osmotic stress, oxidative stress, arsenic and ultraviolet light irradiation. Activated by 'Lys-63'-linked polyubiquitination and by autophosphorylation. Association with TAB1/MAP3K7IP1 and TAB2/MAP3K7IP2 promotes activation through autophosphorylation, whereas PPM1B/PP2CB, PP2A and PPP6C dephosphorylation leads to inactivation. Ceramides are also able to activate MAP3K7/TAK1.</text>
</comment>
<comment type="subunit">
    <text evidence="2 3">Can form homodimer. Binds both upstream activators and downstream substrates in multimolecular complexes. Interacts with TAB1/MAP3K7IP1, TAB2/MAP3K7IP2 and TAB3/MAP3K7IP3. Identified in the TRIKA2 complex composed of MAP3K7/TAK1, TAB1/MAP3K7IP1 and TAB2/MAP3K7IP2. Interacts with PPM1L and PPM1B/PP2CB. Interaction with PP2A and PPP6C leads to its repressed activity. Interacts with TRAF6 and TAB1/MAP3K7IP1; during IL-1 signaling. Interacts with TAOK1 and TAOK2; interaction with TAOK2 interferes with MAP3K7 interaction with IKKA, thus preventing NF-kappa-B activation. Interacts with DYNC2I2 (via WD domains). Interacts with CYLD and RBCK1. Interacts with TGFBR1; induces MAP3K7/TAK1 activation by TRAF6. Interacts with MAPK8IP1 and SMAD6. Interacts with isoform 1 of VRK2. Interacts with DAB2; the interaction is induced by TGF-beta stimulation and may mediate TGF-beta stimulated JNK activation. Interacts with TRIM5. Part of a complex containing ITCH, NDFIP1 and MAP3K7. Interacts with IFIT5; the interaction synergizes the recruitment of IKK to MAP3K7 and enhances IKK phosphorylation. Interacts with PLEKHM1 (via N- and C-terminus). Found in a complex with SH3RF1, RAC2, MAP2K7/MKK7, MAPK8IP1/JIP1, MAPK8/JNK1 and MAPK9/JNK2. Interacts with SASH1 (By similarity). Interacts with RIPK1 (By similarity).</text>
</comment>
<comment type="subcellular location">
    <subcellularLocation>
        <location evidence="1">Cytoplasm</location>
    </subcellularLocation>
    <subcellularLocation>
        <location evidence="1">Cell membrane</location>
        <topology evidence="1">Peripheral membrane protein</topology>
        <orientation evidence="1">Cytoplasmic side</orientation>
    </subcellularLocation>
    <text evidence="1">Although the majority of MAP3K7/TAK1 is found in the cytosol, when complexed with TAB1/MAP3K7IP1 and TAB2/MAP3K7IP2, it is also localized at the cell membrane.</text>
</comment>
<comment type="PTM">
    <text evidence="1">Association with TAB1/MAP3K7IP1 promotes autophosphorylation at Ser-192 and subsequent activation. Association with TAB2/MAP3K7IP2, itself associated with free unanchored Lys-63 polyubiquitin chain, promotes autophosphorylation and subsequent activation of MAP3K7. Dephosphorylation at Ser-192 by PPM1B/PP2CB and at Thr-187 by PP2A and PPP6C leads to inactivation (By similarity).</text>
</comment>
<comment type="PTM">
    <text evidence="2 3">'Lys-48'-linked polyubiquitination at Lys-72 is induced by TNFalpha, and leads to proteasomal degradation. Undergoes 'Lys-48'-linked polyubiquitination catalyzed by ITCH. 'Lys-63'-linked polyubiquitination at Lys-158 by TRIM8 does not lead to proteasomal degradation but contributes to autophosphorylation and activation. Deubiquitinated by CYLD, a protease that selectively cleaves 'Lys-63'-linked ubiquitin chains. Deubiquitinated by USP19; leading to negative regulation of TNF-alpha- and IL-1beta-triggered NF-kappa-B activation.</text>
</comment>
<comment type="similarity">
    <text evidence="7">Belongs to the protein kinase superfamily. STE Ser/Thr protein kinase family. MAP kinase kinase kinase subfamily.</text>
</comment>
<keyword id="KW-0053">Apoptosis</keyword>
<keyword id="KW-0067">ATP-binding</keyword>
<keyword id="KW-1003">Cell membrane</keyword>
<keyword id="KW-0963">Cytoplasm</keyword>
<keyword id="KW-1017">Isopeptide bond</keyword>
<keyword id="KW-0418">Kinase</keyword>
<keyword id="KW-0460">Magnesium</keyword>
<keyword id="KW-0472">Membrane</keyword>
<keyword id="KW-0479">Metal-binding</keyword>
<keyword id="KW-0547">Nucleotide-binding</keyword>
<keyword id="KW-0597">Phosphoprotein</keyword>
<keyword id="KW-1185">Reference proteome</keyword>
<keyword id="KW-0723">Serine/threonine-protein kinase</keyword>
<keyword id="KW-0346">Stress response</keyword>
<keyword id="KW-0804">Transcription</keyword>
<keyword id="KW-0805">Transcription regulation</keyword>
<keyword id="KW-0808">Transferase</keyword>
<keyword id="KW-0832">Ubl conjugation</keyword>